<dbReference type="EC" id="2.7.7.38" evidence="1"/>
<dbReference type="EMBL" id="BA000040">
    <property type="protein sequence ID" value="BAC46687.1"/>
    <property type="molecule type" value="Genomic_DNA"/>
</dbReference>
<dbReference type="RefSeq" id="NP_768062.1">
    <property type="nucleotide sequence ID" value="NC_004463.1"/>
</dbReference>
<dbReference type="RefSeq" id="WP_011084239.1">
    <property type="nucleotide sequence ID" value="NC_004463.1"/>
</dbReference>
<dbReference type="SMR" id="Q89UJ4"/>
<dbReference type="FunCoup" id="Q89UJ4">
    <property type="interactions" value="509"/>
</dbReference>
<dbReference type="STRING" id="224911.AAV28_04050"/>
<dbReference type="EnsemblBacteria" id="BAC46687">
    <property type="protein sequence ID" value="BAC46687"/>
    <property type="gene ID" value="BAC46687"/>
</dbReference>
<dbReference type="GeneID" id="46488697"/>
<dbReference type="KEGG" id="bja:bll1422"/>
<dbReference type="PATRIC" id="fig|224911.44.peg.850"/>
<dbReference type="eggNOG" id="COG1212">
    <property type="taxonomic scope" value="Bacteria"/>
</dbReference>
<dbReference type="HOGENOM" id="CLU_065038_0_1_5"/>
<dbReference type="InParanoid" id="Q89UJ4"/>
<dbReference type="OrthoDB" id="9815559at2"/>
<dbReference type="PhylomeDB" id="Q89UJ4"/>
<dbReference type="UniPathway" id="UPA00030"/>
<dbReference type="UniPathway" id="UPA00358">
    <property type="reaction ID" value="UER00476"/>
</dbReference>
<dbReference type="Proteomes" id="UP000002526">
    <property type="component" value="Chromosome"/>
</dbReference>
<dbReference type="GO" id="GO:0005829">
    <property type="term" value="C:cytosol"/>
    <property type="evidence" value="ECO:0000318"/>
    <property type="project" value="GO_Central"/>
</dbReference>
<dbReference type="GO" id="GO:0008690">
    <property type="term" value="F:3-deoxy-manno-octulosonate cytidylyltransferase activity"/>
    <property type="evidence" value="ECO:0000318"/>
    <property type="project" value="GO_Central"/>
</dbReference>
<dbReference type="GO" id="GO:0033468">
    <property type="term" value="P:CMP-keto-3-deoxy-D-manno-octulosonic acid biosynthetic process"/>
    <property type="evidence" value="ECO:0007669"/>
    <property type="project" value="UniProtKB-UniRule"/>
</dbReference>
<dbReference type="GO" id="GO:0009103">
    <property type="term" value="P:lipopolysaccharide biosynthetic process"/>
    <property type="evidence" value="ECO:0007669"/>
    <property type="project" value="UniProtKB-UniRule"/>
</dbReference>
<dbReference type="CDD" id="cd02517">
    <property type="entry name" value="CMP-KDO-Synthetase"/>
    <property type="match status" value="1"/>
</dbReference>
<dbReference type="Gene3D" id="3.90.550.10">
    <property type="entry name" value="Spore Coat Polysaccharide Biosynthesis Protein SpsA, Chain A"/>
    <property type="match status" value="1"/>
</dbReference>
<dbReference type="HAMAP" id="MF_00057">
    <property type="entry name" value="KdsB"/>
    <property type="match status" value="1"/>
</dbReference>
<dbReference type="InterPro" id="IPR003329">
    <property type="entry name" value="Cytidylyl_trans"/>
</dbReference>
<dbReference type="InterPro" id="IPR004528">
    <property type="entry name" value="KdsB"/>
</dbReference>
<dbReference type="InterPro" id="IPR029044">
    <property type="entry name" value="Nucleotide-diphossugar_trans"/>
</dbReference>
<dbReference type="NCBIfam" id="TIGR00466">
    <property type="entry name" value="kdsB"/>
    <property type="match status" value="1"/>
</dbReference>
<dbReference type="NCBIfam" id="NF003948">
    <property type="entry name" value="PRK05450.1-1"/>
    <property type="match status" value="1"/>
</dbReference>
<dbReference type="NCBIfam" id="NF003952">
    <property type="entry name" value="PRK05450.1-5"/>
    <property type="match status" value="1"/>
</dbReference>
<dbReference type="PANTHER" id="PTHR42866">
    <property type="entry name" value="3-DEOXY-MANNO-OCTULOSONATE CYTIDYLYLTRANSFERASE"/>
    <property type="match status" value="1"/>
</dbReference>
<dbReference type="PANTHER" id="PTHR42866:SF2">
    <property type="entry name" value="3-DEOXY-MANNO-OCTULOSONATE CYTIDYLYLTRANSFERASE, MITOCHONDRIAL"/>
    <property type="match status" value="1"/>
</dbReference>
<dbReference type="Pfam" id="PF02348">
    <property type="entry name" value="CTP_transf_3"/>
    <property type="match status" value="1"/>
</dbReference>
<dbReference type="SUPFAM" id="SSF53448">
    <property type="entry name" value="Nucleotide-diphospho-sugar transferases"/>
    <property type="match status" value="1"/>
</dbReference>
<sequence>MTDPRILVLIPARMAATRLPGKPLADIAGLPMIVHVLRRAEAAGIGRVAVATDTPEIAAVVAAHGGEAVMTRTTHPSGSDRIHEAMQKLDPEGKAEIVINLQGDFPTITPQTIREVLPPFADPAVDIVTLASQIHTEEEDLAPSVVKAVGSPIGPRRLRALYFTRATAPYGNGPRYHHIGLYAYRRAALERFVSLPPSPLELQESLEQLRAVEAGMRIDIMIVDSVPRGVDTPPDLETARSILSKS</sequence>
<organism>
    <name type="scientific">Bradyrhizobium diazoefficiens (strain JCM 10833 / BCRC 13528 / IAM 13628 / NBRC 14792 / USDA 110)</name>
    <dbReference type="NCBI Taxonomy" id="224911"/>
    <lineage>
        <taxon>Bacteria</taxon>
        <taxon>Pseudomonadati</taxon>
        <taxon>Pseudomonadota</taxon>
        <taxon>Alphaproteobacteria</taxon>
        <taxon>Hyphomicrobiales</taxon>
        <taxon>Nitrobacteraceae</taxon>
        <taxon>Bradyrhizobium</taxon>
    </lineage>
</organism>
<evidence type="ECO:0000255" key="1">
    <source>
        <dbReference type="HAMAP-Rule" id="MF_00057"/>
    </source>
</evidence>
<reference key="1">
    <citation type="journal article" date="2002" name="DNA Res.">
        <title>Complete genomic sequence of nitrogen-fixing symbiotic bacterium Bradyrhizobium japonicum USDA110.</title>
        <authorList>
            <person name="Kaneko T."/>
            <person name="Nakamura Y."/>
            <person name="Sato S."/>
            <person name="Minamisawa K."/>
            <person name="Uchiumi T."/>
            <person name="Sasamoto S."/>
            <person name="Watanabe A."/>
            <person name="Idesawa K."/>
            <person name="Iriguchi M."/>
            <person name="Kawashima K."/>
            <person name="Kohara M."/>
            <person name="Matsumoto M."/>
            <person name="Shimpo S."/>
            <person name="Tsuruoka H."/>
            <person name="Wada T."/>
            <person name="Yamada M."/>
            <person name="Tabata S."/>
        </authorList>
    </citation>
    <scope>NUCLEOTIDE SEQUENCE [LARGE SCALE GENOMIC DNA]</scope>
    <source>
        <strain>JCM 10833 / BCRC 13528 / IAM 13628 / NBRC 14792 / USDA 110</strain>
    </source>
</reference>
<proteinExistence type="inferred from homology"/>
<accession>Q89UJ4</accession>
<gene>
    <name evidence="1" type="primary">kdsB</name>
    <name type="ordered locus">bll1422</name>
</gene>
<feature type="chain" id="PRO_0000370008" description="3-deoxy-manno-octulosonate cytidylyltransferase">
    <location>
        <begin position="1"/>
        <end position="246"/>
    </location>
</feature>
<name>KDSB_BRADU</name>
<comment type="function">
    <text evidence="1">Activates KDO (a required 8-carbon sugar) for incorporation into bacterial lipopolysaccharide in Gram-negative bacteria.</text>
</comment>
<comment type="catalytic activity">
    <reaction evidence="1">
        <text>3-deoxy-alpha-D-manno-oct-2-ulosonate + CTP = CMP-3-deoxy-beta-D-manno-octulosonate + diphosphate</text>
        <dbReference type="Rhea" id="RHEA:23448"/>
        <dbReference type="ChEBI" id="CHEBI:33019"/>
        <dbReference type="ChEBI" id="CHEBI:37563"/>
        <dbReference type="ChEBI" id="CHEBI:85986"/>
        <dbReference type="ChEBI" id="CHEBI:85987"/>
        <dbReference type="EC" id="2.7.7.38"/>
    </reaction>
</comment>
<comment type="pathway">
    <text evidence="1">Nucleotide-sugar biosynthesis; CMP-3-deoxy-D-manno-octulosonate biosynthesis; CMP-3-deoxy-D-manno-octulosonate from 3-deoxy-D-manno-octulosonate and CTP: step 1/1.</text>
</comment>
<comment type="pathway">
    <text evidence="1">Bacterial outer membrane biogenesis; lipopolysaccharide biosynthesis.</text>
</comment>
<comment type="subcellular location">
    <subcellularLocation>
        <location evidence="1">Cytoplasm</location>
    </subcellularLocation>
</comment>
<comment type="similarity">
    <text evidence="1">Belongs to the KdsB family.</text>
</comment>
<keyword id="KW-0963">Cytoplasm</keyword>
<keyword id="KW-0448">Lipopolysaccharide biosynthesis</keyword>
<keyword id="KW-0548">Nucleotidyltransferase</keyword>
<keyword id="KW-1185">Reference proteome</keyword>
<keyword id="KW-0808">Transferase</keyword>
<protein>
    <recommendedName>
        <fullName evidence="1">3-deoxy-manno-octulosonate cytidylyltransferase</fullName>
        <ecNumber evidence="1">2.7.7.38</ecNumber>
    </recommendedName>
    <alternativeName>
        <fullName evidence="1">CMP-2-keto-3-deoxyoctulosonic acid synthase</fullName>
        <shortName evidence="1">CKS</shortName>
        <shortName evidence="1">CMP-KDO synthase</shortName>
    </alternativeName>
</protein>